<accession>Q5KQL9</accession>
<accession>A0A0P0WJF8</accession>
<accession>C0SQ91</accession>
<accession>Q0DJV2</accession>
<accession>Q5KQM0</accession>
<comment type="function">
    <text evidence="1">Involved in CpXpG DNA methylation.</text>
</comment>
<comment type="catalytic activity">
    <reaction evidence="8">
        <text>a 2'-deoxycytidine in DNA + S-adenosyl-L-methionine = a 5-methyl-2'-deoxycytidine in DNA + S-adenosyl-L-homocysteine + H(+)</text>
        <dbReference type="Rhea" id="RHEA:13681"/>
        <dbReference type="Rhea" id="RHEA-COMP:11369"/>
        <dbReference type="Rhea" id="RHEA-COMP:11370"/>
        <dbReference type="ChEBI" id="CHEBI:15378"/>
        <dbReference type="ChEBI" id="CHEBI:57856"/>
        <dbReference type="ChEBI" id="CHEBI:59789"/>
        <dbReference type="ChEBI" id="CHEBI:85452"/>
        <dbReference type="ChEBI" id="CHEBI:85454"/>
        <dbReference type="EC" id="2.1.1.37"/>
    </reaction>
</comment>
<comment type="subcellular location">
    <subcellularLocation>
        <location evidence="8">Nucleus</location>
    </subcellularLocation>
</comment>
<comment type="induction">
    <text evidence="6">By cold and salt stresses.</text>
</comment>
<comment type="sequence caution" evidence="8">
    <conflict type="erroneous gene model prediction">
        <sequence resource="EMBL-CDS" id="AAW56861"/>
    </conflict>
</comment>
<comment type="sequence caution" evidence="8">
    <conflict type="erroneous gene model prediction">
        <sequence resource="EMBL-CDS" id="AAW56862"/>
    </conflict>
</comment>
<comment type="sequence caution" evidence="8">
    <conflict type="erroneous gene model prediction">
        <sequence resource="EMBL-CDS" id="BAF16871"/>
    </conflict>
</comment>
<comment type="sequence caution" evidence="8">
    <conflict type="erroneous gene model prediction">
        <sequence resource="EMBL-CDS" id="BAF16872"/>
    </conflict>
</comment>
<comment type="sequence caution" evidence="8">
    <conflict type="erroneous gene model prediction">
        <sequence resource="EMBL-CDS" id="BAS92885"/>
    </conflict>
</comment>
<comment type="sequence caution" evidence="8">
    <conflict type="erroneous gene model prediction">
        <sequence resource="EMBL-CDS" id="BAS92886"/>
    </conflict>
</comment>
<gene>
    <name evidence="8" type="primary">CMT2</name>
    <name evidence="11" type="ordered locus">Os05g0224800/Os05g0224900</name>
    <name evidence="8" type="ordered locus">LOC_Os05g13780/LOC_Os05g13790</name>
    <name evidence="9" type="ORF">OJ1732_H01.8</name>
    <name evidence="10" type="ORF">OJ1732_H01.9</name>
</gene>
<keyword id="KW-0238">DNA-binding</keyword>
<keyword id="KW-0489">Methyltransferase</keyword>
<keyword id="KW-0539">Nucleus</keyword>
<keyword id="KW-1185">Reference proteome</keyword>
<keyword id="KW-0949">S-adenosyl-L-methionine</keyword>
<keyword id="KW-0808">Transferase</keyword>
<reference key="1">
    <citation type="journal article" date="2005" name="Mol. Genet. Genomics">
        <title>A fine physical map of the rice chromosome 5.</title>
        <authorList>
            <person name="Cheng C.-H."/>
            <person name="Chung M.C."/>
            <person name="Liu S.-M."/>
            <person name="Chen S.-K."/>
            <person name="Kao F.Y."/>
            <person name="Lin S.-J."/>
            <person name="Hsiao S.-H."/>
            <person name="Tseng I.C."/>
            <person name="Hsing Y.-I.C."/>
            <person name="Wu H.-P."/>
            <person name="Chen C.-S."/>
            <person name="Shaw J.-F."/>
            <person name="Wu J."/>
            <person name="Matsumoto T."/>
            <person name="Sasaki T."/>
            <person name="Chen H.-C."/>
            <person name="Chow T.-Y."/>
        </authorList>
    </citation>
    <scope>NUCLEOTIDE SEQUENCE [LARGE SCALE GENOMIC DNA]</scope>
    <source>
        <strain>cv. Nipponbare</strain>
    </source>
</reference>
<reference key="2">
    <citation type="journal article" date="2005" name="Nature">
        <title>The map-based sequence of the rice genome.</title>
        <authorList>
            <consortium name="International rice genome sequencing project (IRGSP)"/>
        </authorList>
    </citation>
    <scope>NUCLEOTIDE SEQUENCE [LARGE SCALE GENOMIC DNA]</scope>
    <source>
        <strain>cv. Nipponbare</strain>
    </source>
</reference>
<reference key="3">
    <citation type="journal article" date="2008" name="Nucleic Acids Res.">
        <title>The rice annotation project database (RAP-DB): 2008 update.</title>
        <authorList>
            <consortium name="The rice annotation project (RAP)"/>
        </authorList>
    </citation>
    <scope>GENOME REANNOTATION</scope>
    <source>
        <strain>cv. Nipponbare</strain>
    </source>
</reference>
<reference key="4">
    <citation type="journal article" date="2013" name="Rice">
        <title>Improvement of the Oryza sativa Nipponbare reference genome using next generation sequence and optical map data.</title>
        <authorList>
            <person name="Kawahara Y."/>
            <person name="de la Bastide M."/>
            <person name="Hamilton J.P."/>
            <person name="Kanamori H."/>
            <person name="McCombie W.R."/>
            <person name="Ouyang S."/>
            <person name="Schwartz D.C."/>
            <person name="Tanaka T."/>
            <person name="Wu J."/>
            <person name="Zhou S."/>
            <person name="Childs K.L."/>
            <person name="Davidson R.M."/>
            <person name="Lin H."/>
            <person name="Quesada-Ocampo L."/>
            <person name="Vaillancourt B."/>
            <person name="Sakai H."/>
            <person name="Lee S.S."/>
            <person name="Kim J."/>
            <person name="Numa H."/>
            <person name="Itoh T."/>
            <person name="Buell C.R."/>
            <person name="Matsumoto T."/>
        </authorList>
    </citation>
    <scope>GENOME REANNOTATION</scope>
    <source>
        <strain>cv. Nipponbare</strain>
    </source>
</reference>
<reference key="5">
    <citation type="journal article" date="2003" name="Science">
        <title>Collection, mapping, and annotation of over 28,000 cDNA clones from japonica rice.</title>
        <authorList>
            <consortium name="The rice full-length cDNA consortium"/>
        </authorList>
    </citation>
    <scope>NUCLEOTIDE SEQUENCE [LARGE SCALE MRNA] OF 1-571</scope>
    <source>
        <strain>cv. Nipponbare</strain>
    </source>
</reference>
<reference key="6">
    <citation type="journal article" date="2015" name="Plant J.">
        <title>Loss of function mutations in the rice chromomethylase OsCMT3a cause a burst of transposition.</title>
        <authorList>
            <person name="Cheng C."/>
            <person name="Tarutani Y."/>
            <person name="Miyao A."/>
            <person name="Ito T."/>
            <person name="Yamazaki M."/>
            <person name="Sakai H."/>
            <person name="Fukai E."/>
            <person name="Hirochika H."/>
        </authorList>
    </citation>
    <scope>NUCLEOTIDE SEQUENCE [GENOMIC DNA] OF 545-1293</scope>
    <source>
        <strain>cv. Nipponbare</strain>
    </source>
</reference>
<reference key="7">
    <citation type="journal article" date="2009" name="FEBS J.">
        <title>Rice cytosine DNA methyltransferases - gene expression profiling during reproductive development and abiotic stress.</title>
        <authorList>
            <person name="Sharma R."/>
            <person name="Mohan Singh R.K."/>
            <person name="Malik G."/>
            <person name="Deveshwar P."/>
            <person name="Tyagi A.K."/>
            <person name="Kapoor S."/>
            <person name="Kapoor M."/>
        </authorList>
    </citation>
    <scope>INDUCTION</scope>
</reference>
<organism>
    <name type="scientific">Oryza sativa subsp. japonica</name>
    <name type="common">Rice</name>
    <dbReference type="NCBI Taxonomy" id="39947"/>
    <lineage>
        <taxon>Eukaryota</taxon>
        <taxon>Viridiplantae</taxon>
        <taxon>Streptophyta</taxon>
        <taxon>Embryophyta</taxon>
        <taxon>Tracheophyta</taxon>
        <taxon>Spermatophyta</taxon>
        <taxon>Magnoliopsida</taxon>
        <taxon>Liliopsida</taxon>
        <taxon>Poales</taxon>
        <taxon>Poaceae</taxon>
        <taxon>BOP clade</taxon>
        <taxon>Oryzoideae</taxon>
        <taxon>Oryzeae</taxon>
        <taxon>Oryzinae</taxon>
        <taxon>Oryza</taxon>
        <taxon>Oryza sativa</taxon>
    </lineage>
</organism>
<evidence type="ECO:0000250" key="1">
    <source>
        <dbReference type="UniProtKB" id="C0SQ89"/>
    </source>
</evidence>
<evidence type="ECO:0000255" key="2">
    <source>
        <dbReference type="PROSITE-ProRule" id="PRU00053"/>
    </source>
</evidence>
<evidence type="ECO:0000255" key="3">
    <source>
        <dbReference type="PROSITE-ProRule" id="PRU00370"/>
    </source>
</evidence>
<evidence type="ECO:0000255" key="4">
    <source>
        <dbReference type="PROSITE-ProRule" id="PRU01016"/>
    </source>
</evidence>
<evidence type="ECO:0000256" key="5">
    <source>
        <dbReference type="SAM" id="MobiDB-lite"/>
    </source>
</evidence>
<evidence type="ECO:0000269" key="6">
    <source>
    </source>
</evidence>
<evidence type="ECO:0000303" key="7">
    <source>
    </source>
</evidence>
<evidence type="ECO:0000305" key="8"/>
<evidence type="ECO:0000312" key="9">
    <source>
        <dbReference type="EMBL" id="AAW56861.1"/>
    </source>
</evidence>
<evidence type="ECO:0000312" key="10">
    <source>
        <dbReference type="EMBL" id="AAW56862.1"/>
    </source>
</evidence>
<evidence type="ECO:0000312" key="11">
    <source>
        <dbReference type="EMBL" id="BAF16872.1"/>
    </source>
</evidence>
<sequence>METPPPDPVSPPPPAADEGSPGGDDGAEDAGGFSAGLDSLWTALFGSPEELEPMWSPPRGFGVGAEFAAAEVEPEIMDVAGGPWDGAPWRSSGVVAGEGAATALVPPTAAAGFAEFEPAAPIDSYPAGAAAASLGDVPEVSALDSGVDCSPDPPPSSSPPVDFDARGFDPVADSAPAMESPLPPSVASSEANLDGRMLDCTLNSVPSPPLASPYEVGLGAEDPIKDSSPSVAWGTTMDAKDPEVDATCANGTALRRSRRIMKIKSAASSMPLNQNGDSSRASKRRVADSRKSRSSEGSKLPAFTGPISVNTVDLINGVKVQGLQEIVAVENVSSSYDNNQKAGGLYNQVVVALPAASNSLLKDKGASVLPRRKTRLASKVLVNSDRVSAISPVVNGGPPVQKSDVCIPTKKHKLAVEECLTSLDGVDGGGIVLCNSKLKSAKSRVVSKTPQGRGRRSPQPPKTQRARTLSVKYLEKLKRAENNNNNGSMSKSPRVPMIPENNGSMSKSPRVPIIPELSTKHELVLDKHMVDSVMLETDDGSCFFVGDAVPDDEARKQWPHRYEINDQIMKKDKRTSSQTFANAGKAVLDVKCHYLQAKVSRYTFCIGECAFVKGPEGKPNYIGRLLEFFETKTGECYFRVQWFFTAEDTVIGEQAQSHDPRRLFYSDLTDDNLLDCIVSKVTIVQVPPSVDGKSKSVPSSDYYYDMKYSIDYSTFSTIEMEDTDDLMQSCYTSRINDKMKKIDVNKKHKSPVLEKMELSLLDLYCGCGGMSTGLCLGARGGGVNLSARWAIDDDEIACESFRNNHPETRVRNETTDDFLELLKEWEKLCKTYVKHSRTKACVDSTTESNNETPDCSTVPPEEFEVWKLVDICFGDPNKVSKHGLYFKVRWKGYGPHHDTWEPVEGLRNCKEAIRDFVIEGHRQRILPRPGDVDVVCGGPPCQGISGYNRNREFEAPFKCEKNKQIIVFMDVVQFLKPKYVYMENVLDILKFADATLARYALSRLVAMHYQARLGIMAAGCYGLPQFRMRVFLLGCHSKEKLPPFPLPTHEAIVKNGCPLAFERNLVGWPNDTPMQLARPIVLEDILSDLPEVANGESRDEMLYVKGPQTEFQRYIRSFNVEVHGPRAHVTKDSKSSKLYDHRPLVLDNDNYQRILQIPKRKGANFRDLSGVIVGPDNVARLDPTKERVLLPSGRPLVLDCILAYENGKSLRPFGRVWWDEVVGTVLTVPNARMQALIHPAQDRLLTIRESARLQGFPDNYRFRGTVKDRYRQIGNAVAVPVGRALGYALAMAYLKKSGDDPLMLLPPNFAFSHDLRGFA</sequence>
<name>CMT2_ORYSJ</name>
<feature type="chain" id="PRO_0000438157" description="DNA (cytosine-5)-methyltransferase CMT2">
    <location>
        <begin position="1"/>
        <end position="1319"/>
    </location>
</feature>
<feature type="domain" description="BAH" evidence="3">
    <location>
        <begin position="602"/>
        <end position="719"/>
    </location>
</feature>
<feature type="domain" description="SAM-dependent MTase C5-type" evidence="4">
    <location>
        <begin position="758"/>
        <end position="1296"/>
    </location>
</feature>
<feature type="domain" description="Chromo" evidence="2">
    <location>
        <begin position="863"/>
        <end position="928"/>
    </location>
</feature>
<feature type="region of interest" description="Disordered" evidence="5">
    <location>
        <begin position="1"/>
        <end position="34"/>
    </location>
</feature>
<feature type="region of interest" description="Disordered" evidence="5">
    <location>
        <begin position="142"/>
        <end position="189"/>
    </location>
</feature>
<feature type="region of interest" description="Disordered" evidence="5">
    <location>
        <begin position="265"/>
        <end position="302"/>
    </location>
</feature>
<feature type="region of interest" description="Disordered" evidence="5">
    <location>
        <begin position="442"/>
        <end position="468"/>
    </location>
</feature>
<feature type="compositionally biased region" description="Pro residues" evidence="5">
    <location>
        <begin position="1"/>
        <end position="15"/>
    </location>
</feature>
<feature type="compositionally biased region" description="Polar residues" evidence="5">
    <location>
        <begin position="266"/>
        <end position="279"/>
    </location>
</feature>
<feature type="compositionally biased region" description="Basic and acidic residues" evidence="5">
    <location>
        <begin position="285"/>
        <end position="296"/>
    </location>
</feature>
<feature type="active site" evidence="4">
    <location>
        <position position="941"/>
    </location>
</feature>
<proteinExistence type="evidence at transcript level"/>
<protein>
    <recommendedName>
        <fullName evidence="8">DNA (cytosine-5)-methyltransferase CMT2</fullName>
        <ecNumber evidence="8">2.1.1.37</ecNumber>
    </recommendedName>
    <alternativeName>
        <fullName evidence="8">Chromomethylase 2</fullName>
    </alternativeName>
    <alternativeName>
        <fullName evidence="7">OsCMT2</fullName>
    </alternativeName>
</protein>
<dbReference type="EC" id="2.1.1.37" evidence="8"/>
<dbReference type="EMBL" id="AC098835">
    <property type="protein sequence ID" value="AAW56861.1"/>
    <property type="status" value="ALT_SEQ"/>
    <property type="molecule type" value="Genomic_DNA"/>
</dbReference>
<dbReference type="EMBL" id="AC098835">
    <property type="protein sequence ID" value="AAW56862.1"/>
    <property type="status" value="ALT_SEQ"/>
    <property type="molecule type" value="Genomic_DNA"/>
</dbReference>
<dbReference type="EMBL" id="AP008211">
    <property type="protein sequence ID" value="BAF16871.2"/>
    <property type="status" value="ALT_SEQ"/>
    <property type="molecule type" value="Genomic_DNA"/>
</dbReference>
<dbReference type="EMBL" id="AP008211">
    <property type="protein sequence ID" value="BAF16872.1"/>
    <property type="status" value="ALT_SEQ"/>
    <property type="molecule type" value="Genomic_DNA"/>
</dbReference>
<dbReference type="EMBL" id="AP014961">
    <property type="protein sequence ID" value="BAS92885.1"/>
    <property type="status" value="ALT_SEQ"/>
    <property type="molecule type" value="Genomic_DNA"/>
</dbReference>
<dbReference type="EMBL" id="AP014961">
    <property type="protein sequence ID" value="BAS92886.1"/>
    <property type="status" value="ALT_SEQ"/>
    <property type="molecule type" value="Genomic_DNA"/>
</dbReference>
<dbReference type="EMBL" id="AK109728">
    <property type="protein sequence ID" value="BAG98874.1"/>
    <property type="molecule type" value="mRNA"/>
</dbReference>
<dbReference type="EMBL" id="AB360585">
    <property type="protein sequence ID" value="BAH37021.1"/>
    <property type="molecule type" value="Genomic_DNA"/>
</dbReference>
<dbReference type="SMR" id="Q5KQL9"/>
<dbReference type="FunCoup" id="Q5KQL9">
    <property type="interactions" value="104"/>
</dbReference>
<dbReference type="STRING" id="39947.Q5KQL9"/>
<dbReference type="REBASE" id="11924">
    <property type="entry name" value="M.OsaCMT2P"/>
</dbReference>
<dbReference type="iPTMnet" id="Q5KQL9"/>
<dbReference type="PaxDb" id="39947-Q5KQL9"/>
<dbReference type="KEGG" id="dosa:Os05g0224800"/>
<dbReference type="KEGG" id="dosa:Os05g0224900"/>
<dbReference type="KEGG" id="osa:4338140"/>
<dbReference type="eggNOG" id="ENOG502QT36">
    <property type="taxonomic scope" value="Eukaryota"/>
</dbReference>
<dbReference type="HOGENOM" id="CLU_475212_0_0_1"/>
<dbReference type="InParanoid" id="Q5KQL9"/>
<dbReference type="OrthoDB" id="5376140at2759"/>
<dbReference type="Proteomes" id="UP000000763">
    <property type="component" value="Chromosome 5"/>
</dbReference>
<dbReference type="Proteomes" id="UP000059680">
    <property type="component" value="Chromosome 5"/>
</dbReference>
<dbReference type="GO" id="GO:0005634">
    <property type="term" value="C:nucleus"/>
    <property type="evidence" value="ECO:0000318"/>
    <property type="project" value="GO_Central"/>
</dbReference>
<dbReference type="GO" id="GO:0003682">
    <property type="term" value="F:chromatin binding"/>
    <property type="evidence" value="ECO:0007669"/>
    <property type="project" value="InterPro"/>
</dbReference>
<dbReference type="GO" id="GO:0003886">
    <property type="term" value="F:DNA (cytosine-5-)-methyltransferase activity"/>
    <property type="evidence" value="ECO:0000318"/>
    <property type="project" value="GO_Central"/>
</dbReference>
<dbReference type="GO" id="GO:0003677">
    <property type="term" value="F:DNA binding"/>
    <property type="evidence" value="ECO:0000318"/>
    <property type="project" value="GO_Central"/>
</dbReference>
<dbReference type="GO" id="GO:0032259">
    <property type="term" value="P:methylation"/>
    <property type="evidence" value="ECO:0007669"/>
    <property type="project" value="UniProtKB-KW"/>
</dbReference>
<dbReference type="GO" id="GO:0044027">
    <property type="term" value="P:negative regulation of gene expression via chromosomal CpG island methylation"/>
    <property type="evidence" value="ECO:0000318"/>
    <property type="project" value="GO_Central"/>
</dbReference>
<dbReference type="CDD" id="cd18635">
    <property type="entry name" value="CD_CMT3_like"/>
    <property type="match status" value="1"/>
</dbReference>
<dbReference type="FunFam" id="2.30.30.490:FF:000011">
    <property type="entry name" value="DNA (cytosine-5)-methyltransferase 1"/>
    <property type="match status" value="1"/>
</dbReference>
<dbReference type="FunFam" id="3.40.50.150:FF:000143">
    <property type="entry name" value="DNA (cytosine-5)-methyltransferase 1"/>
    <property type="match status" value="1"/>
</dbReference>
<dbReference type="FunFam" id="3.90.120.10:FF:000003">
    <property type="entry name" value="DNA (cytosine-5)-methyltransferase 1"/>
    <property type="match status" value="1"/>
</dbReference>
<dbReference type="Gene3D" id="2.30.30.490">
    <property type="match status" value="1"/>
</dbReference>
<dbReference type="Gene3D" id="3.90.120.10">
    <property type="entry name" value="DNA Methylase, subunit A, domain 2"/>
    <property type="match status" value="1"/>
</dbReference>
<dbReference type="Gene3D" id="3.40.50.150">
    <property type="entry name" value="Vaccinia Virus protein VP39"/>
    <property type="match status" value="1"/>
</dbReference>
<dbReference type="InterPro" id="IPR001025">
    <property type="entry name" value="BAH_dom"/>
</dbReference>
<dbReference type="InterPro" id="IPR043151">
    <property type="entry name" value="BAH_sf"/>
</dbReference>
<dbReference type="InterPro" id="IPR050390">
    <property type="entry name" value="C5-Methyltransferase"/>
</dbReference>
<dbReference type="InterPro" id="IPR018117">
    <property type="entry name" value="C5_DNA_meth_AS"/>
</dbReference>
<dbReference type="InterPro" id="IPR001525">
    <property type="entry name" value="C5_MeTfrase"/>
</dbReference>
<dbReference type="InterPro" id="IPR031303">
    <property type="entry name" value="C5_meth_CS"/>
</dbReference>
<dbReference type="InterPro" id="IPR016197">
    <property type="entry name" value="Chromo-like_dom_sf"/>
</dbReference>
<dbReference type="InterPro" id="IPR000953">
    <property type="entry name" value="Chromo/chromo_shadow_dom"/>
</dbReference>
<dbReference type="InterPro" id="IPR023780">
    <property type="entry name" value="Chromo_domain"/>
</dbReference>
<dbReference type="InterPro" id="IPR023779">
    <property type="entry name" value="Chromodomain_CS"/>
</dbReference>
<dbReference type="InterPro" id="IPR029063">
    <property type="entry name" value="SAM-dependent_MTases_sf"/>
</dbReference>
<dbReference type="PANTHER" id="PTHR10629">
    <property type="entry name" value="CYTOSINE-SPECIFIC METHYLTRANSFERASE"/>
    <property type="match status" value="1"/>
</dbReference>
<dbReference type="PANTHER" id="PTHR10629:SF34">
    <property type="entry name" value="DNA (CYTOSINE-5)-METHYLTRANSFERASE CMT2"/>
    <property type="match status" value="1"/>
</dbReference>
<dbReference type="Pfam" id="PF01426">
    <property type="entry name" value="BAH"/>
    <property type="match status" value="1"/>
</dbReference>
<dbReference type="Pfam" id="PF00385">
    <property type="entry name" value="Chromo"/>
    <property type="match status" value="1"/>
</dbReference>
<dbReference type="Pfam" id="PF00145">
    <property type="entry name" value="DNA_methylase"/>
    <property type="match status" value="1"/>
</dbReference>
<dbReference type="PRINTS" id="PR00105">
    <property type="entry name" value="C5METTRFRASE"/>
</dbReference>
<dbReference type="SMART" id="SM00439">
    <property type="entry name" value="BAH"/>
    <property type="match status" value="1"/>
</dbReference>
<dbReference type="SMART" id="SM00298">
    <property type="entry name" value="CHROMO"/>
    <property type="match status" value="1"/>
</dbReference>
<dbReference type="SUPFAM" id="SSF54160">
    <property type="entry name" value="Chromo domain-like"/>
    <property type="match status" value="1"/>
</dbReference>
<dbReference type="SUPFAM" id="SSF53335">
    <property type="entry name" value="S-adenosyl-L-methionine-dependent methyltransferases"/>
    <property type="match status" value="1"/>
</dbReference>
<dbReference type="PROSITE" id="PS51038">
    <property type="entry name" value="BAH"/>
    <property type="match status" value="1"/>
</dbReference>
<dbReference type="PROSITE" id="PS00094">
    <property type="entry name" value="C5_MTASE_1"/>
    <property type="match status" value="1"/>
</dbReference>
<dbReference type="PROSITE" id="PS00095">
    <property type="entry name" value="C5_MTASE_2"/>
    <property type="match status" value="1"/>
</dbReference>
<dbReference type="PROSITE" id="PS00598">
    <property type="entry name" value="CHROMO_1"/>
    <property type="match status" value="1"/>
</dbReference>
<dbReference type="PROSITE" id="PS50013">
    <property type="entry name" value="CHROMO_2"/>
    <property type="match status" value="1"/>
</dbReference>
<dbReference type="PROSITE" id="PS51679">
    <property type="entry name" value="SAM_MT_C5"/>
    <property type="match status" value="1"/>
</dbReference>